<dbReference type="EC" id="2.4.2.21" evidence="1"/>
<dbReference type="EMBL" id="AE007869">
    <property type="protein sequence ID" value="AAK87655.2"/>
    <property type="molecule type" value="Genomic_DNA"/>
</dbReference>
<dbReference type="PIR" id="AH2808">
    <property type="entry name" value="AH2808"/>
</dbReference>
<dbReference type="PIR" id="F97587">
    <property type="entry name" value="F97587"/>
</dbReference>
<dbReference type="RefSeq" id="NP_354870.2">
    <property type="nucleotide sequence ID" value="NC_003062.2"/>
</dbReference>
<dbReference type="RefSeq" id="WP_006314026.1">
    <property type="nucleotide sequence ID" value="NC_003062.2"/>
</dbReference>
<dbReference type="SMR" id="Q8UE71"/>
<dbReference type="STRING" id="176299.Atu1890"/>
<dbReference type="EnsemblBacteria" id="AAK87655">
    <property type="protein sequence ID" value="AAK87655"/>
    <property type="gene ID" value="Atu1890"/>
</dbReference>
<dbReference type="GeneID" id="1133928"/>
<dbReference type="KEGG" id="atu:Atu1890"/>
<dbReference type="PATRIC" id="fig|176299.10.peg.1904"/>
<dbReference type="eggNOG" id="COG2038">
    <property type="taxonomic scope" value="Bacteria"/>
</dbReference>
<dbReference type="HOGENOM" id="CLU_002982_0_1_5"/>
<dbReference type="OrthoDB" id="9781491at2"/>
<dbReference type="PhylomeDB" id="Q8UE71"/>
<dbReference type="BioCyc" id="AGRO:ATU1890-MONOMER"/>
<dbReference type="UniPathway" id="UPA00061">
    <property type="reaction ID" value="UER00516"/>
</dbReference>
<dbReference type="Proteomes" id="UP000000813">
    <property type="component" value="Chromosome circular"/>
</dbReference>
<dbReference type="GO" id="GO:0008939">
    <property type="term" value="F:nicotinate-nucleotide-dimethylbenzimidazole phosphoribosyltransferase activity"/>
    <property type="evidence" value="ECO:0007669"/>
    <property type="project" value="UniProtKB-UniRule"/>
</dbReference>
<dbReference type="GO" id="GO:0009236">
    <property type="term" value="P:cobalamin biosynthetic process"/>
    <property type="evidence" value="ECO:0007669"/>
    <property type="project" value="UniProtKB-KW"/>
</dbReference>
<dbReference type="CDD" id="cd02439">
    <property type="entry name" value="DMB-PRT_CobT"/>
    <property type="match status" value="1"/>
</dbReference>
<dbReference type="Gene3D" id="1.10.1610.10">
    <property type="match status" value="1"/>
</dbReference>
<dbReference type="Gene3D" id="3.40.50.10210">
    <property type="match status" value="1"/>
</dbReference>
<dbReference type="HAMAP" id="MF_00230">
    <property type="entry name" value="CobT"/>
    <property type="match status" value="1"/>
</dbReference>
<dbReference type="InterPro" id="IPR003200">
    <property type="entry name" value="Nict_dMeBzImd_PRibTrfase"/>
</dbReference>
<dbReference type="InterPro" id="IPR017846">
    <property type="entry name" value="Nict_dMeBzImd_PRibTrfase_bact"/>
</dbReference>
<dbReference type="InterPro" id="IPR023195">
    <property type="entry name" value="Nict_dMeBzImd_PRibTrfase_N"/>
</dbReference>
<dbReference type="InterPro" id="IPR036087">
    <property type="entry name" value="Nict_dMeBzImd_PRibTrfase_sf"/>
</dbReference>
<dbReference type="NCBIfam" id="TIGR03160">
    <property type="entry name" value="cobT_DBIPRT"/>
    <property type="match status" value="1"/>
</dbReference>
<dbReference type="NCBIfam" id="NF000996">
    <property type="entry name" value="PRK00105.1"/>
    <property type="match status" value="1"/>
</dbReference>
<dbReference type="PANTHER" id="PTHR43463">
    <property type="entry name" value="NICOTINATE-NUCLEOTIDE--DIMETHYLBENZIMIDAZOLE PHOSPHORIBOSYLTRANSFERASE"/>
    <property type="match status" value="1"/>
</dbReference>
<dbReference type="PANTHER" id="PTHR43463:SF1">
    <property type="entry name" value="NICOTINATE-NUCLEOTIDE--DIMETHYLBENZIMIDAZOLE PHOSPHORIBOSYLTRANSFERASE"/>
    <property type="match status" value="1"/>
</dbReference>
<dbReference type="Pfam" id="PF02277">
    <property type="entry name" value="DBI_PRT"/>
    <property type="match status" value="1"/>
</dbReference>
<dbReference type="SUPFAM" id="SSF52733">
    <property type="entry name" value="Nicotinate mononucleotide:5,6-dimethylbenzimidazole phosphoribosyltransferase (CobT)"/>
    <property type="match status" value="1"/>
</dbReference>
<organism>
    <name type="scientific">Agrobacterium fabrum (strain C58 / ATCC 33970)</name>
    <name type="common">Agrobacterium tumefaciens (strain C58)</name>
    <dbReference type="NCBI Taxonomy" id="176299"/>
    <lineage>
        <taxon>Bacteria</taxon>
        <taxon>Pseudomonadati</taxon>
        <taxon>Pseudomonadota</taxon>
        <taxon>Alphaproteobacteria</taxon>
        <taxon>Hyphomicrobiales</taxon>
        <taxon>Rhizobiaceae</taxon>
        <taxon>Rhizobium/Agrobacterium group</taxon>
        <taxon>Agrobacterium</taxon>
        <taxon>Agrobacterium tumefaciens complex</taxon>
    </lineage>
</organism>
<name>COBT_AGRFC</name>
<keyword id="KW-0169">Cobalamin biosynthesis</keyword>
<keyword id="KW-0328">Glycosyltransferase</keyword>
<keyword id="KW-1185">Reference proteome</keyword>
<keyword id="KW-0808">Transferase</keyword>
<evidence type="ECO:0000255" key="1">
    <source>
        <dbReference type="HAMAP-Rule" id="MF_00230"/>
    </source>
</evidence>
<feature type="chain" id="PRO_0000167035" description="Nicotinate-nucleotide--dimethylbenzimidazole phosphoribosyltransferase">
    <location>
        <begin position="1"/>
        <end position="344"/>
    </location>
</feature>
<feature type="active site" description="Proton acceptor" evidence="1">
    <location>
        <position position="305"/>
    </location>
</feature>
<proteinExistence type="inferred from homology"/>
<accession>Q8UE71</accession>
<comment type="function">
    <text evidence="1">Catalyzes the synthesis of alpha-ribazole-5'-phosphate from nicotinate mononucleotide (NAMN) and 5,6-dimethylbenzimidazole (DMB).</text>
</comment>
<comment type="catalytic activity">
    <reaction evidence="1">
        <text>5,6-dimethylbenzimidazole + nicotinate beta-D-ribonucleotide = alpha-ribazole 5'-phosphate + nicotinate + H(+)</text>
        <dbReference type="Rhea" id="RHEA:11196"/>
        <dbReference type="ChEBI" id="CHEBI:15378"/>
        <dbReference type="ChEBI" id="CHEBI:15890"/>
        <dbReference type="ChEBI" id="CHEBI:32544"/>
        <dbReference type="ChEBI" id="CHEBI:57502"/>
        <dbReference type="ChEBI" id="CHEBI:57918"/>
        <dbReference type="EC" id="2.4.2.21"/>
    </reaction>
</comment>
<comment type="pathway">
    <text evidence="1">Nucleoside biosynthesis; alpha-ribazole biosynthesis; alpha-ribazole from 5,6-dimethylbenzimidazole: step 1/2.</text>
</comment>
<comment type="similarity">
    <text evidence="1">Belongs to the CobT family.</text>
</comment>
<gene>
    <name evidence="1" type="primary">cobT</name>
    <name type="ordered locus">Atu1890</name>
    <name type="ORF">AGR_C_3467</name>
</gene>
<sequence>MSMSGLPFDDFRALLRELPGPDTHALVAAKERNAQLTKPAGSLGRLEEIAMWLAAWSGRSPAVTRPLVAIFAGNHGVTRHGVTPYPTSVTQQMVENFAAGGAAINQICVANDLGLKIFDLALDYPTGDITCEPALSERDCAATMAFGMEAIAGGTDLLCVGEMGIGNTTIAAAINLALYGGTAEEWTGPGTGSEGEVMARKIAAVKAAVEFHKDHLSDPLEIMRRLGGREIAAIAGAILAARVQRIPVLIDGYVATAAAALLKAANSSALDHCLIGHVSGEPGHLAAVEKLGKTPLLALGMRLGEGTGAALAAGIVKAAAACHSGMATFEAAGVDTRISPRTEH</sequence>
<protein>
    <recommendedName>
        <fullName evidence="1">Nicotinate-nucleotide--dimethylbenzimidazole phosphoribosyltransferase</fullName>
        <shortName evidence="1">NN:DBI PRT</shortName>
        <ecNumber evidence="1">2.4.2.21</ecNumber>
    </recommendedName>
    <alternativeName>
        <fullName evidence="1">N(1)-alpha-phosphoribosyltransferase</fullName>
    </alternativeName>
</protein>
<reference key="1">
    <citation type="journal article" date="2001" name="Science">
        <title>The genome of the natural genetic engineer Agrobacterium tumefaciens C58.</title>
        <authorList>
            <person name="Wood D.W."/>
            <person name="Setubal J.C."/>
            <person name="Kaul R."/>
            <person name="Monks D.E."/>
            <person name="Kitajima J.P."/>
            <person name="Okura V.K."/>
            <person name="Zhou Y."/>
            <person name="Chen L."/>
            <person name="Wood G.E."/>
            <person name="Almeida N.F. Jr."/>
            <person name="Woo L."/>
            <person name="Chen Y."/>
            <person name="Paulsen I.T."/>
            <person name="Eisen J.A."/>
            <person name="Karp P.D."/>
            <person name="Bovee D. Sr."/>
            <person name="Chapman P."/>
            <person name="Clendenning J."/>
            <person name="Deatherage G."/>
            <person name="Gillet W."/>
            <person name="Grant C."/>
            <person name="Kutyavin T."/>
            <person name="Levy R."/>
            <person name="Li M.-J."/>
            <person name="McClelland E."/>
            <person name="Palmieri A."/>
            <person name="Raymond C."/>
            <person name="Rouse G."/>
            <person name="Saenphimmachak C."/>
            <person name="Wu Z."/>
            <person name="Romero P."/>
            <person name="Gordon D."/>
            <person name="Zhang S."/>
            <person name="Yoo H."/>
            <person name="Tao Y."/>
            <person name="Biddle P."/>
            <person name="Jung M."/>
            <person name="Krespan W."/>
            <person name="Perry M."/>
            <person name="Gordon-Kamm B."/>
            <person name="Liao L."/>
            <person name="Kim S."/>
            <person name="Hendrick C."/>
            <person name="Zhao Z.-Y."/>
            <person name="Dolan M."/>
            <person name="Chumley F."/>
            <person name="Tingey S.V."/>
            <person name="Tomb J.-F."/>
            <person name="Gordon M.P."/>
            <person name="Olson M.V."/>
            <person name="Nester E.W."/>
        </authorList>
    </citation>
    <scope>NUCLEOTIDE SEQUENCE [LARGE SCALE GENOMIC DNA]</scope>
    <source>
        <strain>C58 / ATCC 33970</strain>
    </source>
</reference>
<reference key="2">
    <citation type="journal article" date="2001" name="Science">
        <title>Genome sequence of the plant pathogen and biotechnology agent Agrobacterium tumefaciens C58.</title>
        <authorList>
            <person name="Goodner B."/>
            <person name="Hinkle G."/>
            <person name="Gattung S."/>
            <person name="Miller N."/>
            <person name="Blanchard M."/>
            <person name="Qurollo B."/>
            <person name="Goldman B.S."/>
            <person name="Cao Y."/>
            <person name="Askenazi M."/>
            <person name="Halling C."/>
            <person name="Mullin L."/>
            <person name="Houmiel K."/>
            <person name="Gordon J."/>
            <person name="Vaudin M."/>
            <person name="Iartchouk O."/>
            <person name="Epp A."/>
            <person name="Liu F."/>
            <person name="Wollam C."/>
            <person name="Allinger M."/>
            <person name="Doughty D."/>
            <person name="Scott C."/>
            <person name="Lappas C."/>
            <person name="Markelz B."/>
            <person name="Flanagan C."/>
            <person name="Crowell C."/>
            <person name="Gurson J."/>
            <person name="Lomo C."/>
            <person name="Sear C."/>
            <person name="Strub G."/>
            <person name="Cielo C."/>
            <person name="Slater S."/>
        </authorList>
    </citation>
    <scope>NUCLEOTIDE SEQUENCE [LARGE SCALE GENOMIC DNA]</scope>
    <source>
        <strain>C58 / ATCC 33970</strain>
    </source>
</reference>